<protein>
    <recommendedName>
        <fullName evidence="1">Large ribosomal subunit protein eL31</fullName>
    </recommendedName>
    <alternativeName>
        <fullName evidence="2">50S ribosomal protein L31e</fullName>
    </alternativeName>
</protein>
<organism>
    <name type="scientific">Saccharolobus islandicus (strain Y.N.15.51 / Yellowstone #2)</name>
    <name type="common">Sulfolobus islandicus</name>
    <dbReference type="NCBI Taxonomy" id="419942"/>
    <lineage>
        <taxon>Archaea</taxon>
        <taxon>Thermoproteota</taxon>
        <taxon>Thermoprotei</taxon>
        <taxon>Sulfolobales</taxon>
        <taxon>Sulfolobaceae</taxon>
        <taxon>Saccharolobus</taxon>
    </lineage>
</organism>
<keyword id="KW-0687">Ribonucleoprotein</keyword>
<keyword id="KW-0689">Ribosomal protein</keyword>
<feature type="chain" id="PRO_1000205980" description="Large ribosomal subunit protein eL31">
    <location>
        <begin position="1"/>
        <end position="88"/>
    </location>
</feature>
<sequence>MKEKDNFEMVINLRKIKTGKRTGRSKRAVKFVRKIVARHFNADKVVIDPLLAKSISKNGNDKVVSKVRVVVSKVGEKIYLVRLAIKSR</sequence>
<gene>
    <name evidence="1" type="primary">rpl31e</name>
    <name type="ordered locus">YN1551_1055</name>
</gene>
<comment type="similarity">
    <text evidence="1">Belongs to the eukaryotic ribosomal protein eL31 family.</text>
</comment>
<name>RL31_SACI1</name>
<evidence type="ECO:0000255" key="1">
    <source>
        <dbReference type="HAMAP-Rule" id="MF_00410"/>
    </source>
</evidence>
<evidence type="ECO:0000305" key="2"/>
<reference key="1">
    <citation type="journal article" date="2009" name="Proc. Natl. Acad. Sci. U.S.A.">
        <title>Biogeography of the Sulfolobus islandicus pan-genome.</title>
        <authorList>
            <person name="Reno M.L."/>
            <person name="Held N.L."/>
            <person name="Fields C.J."/>
            <person name="Burke P.V."/>
            <person name="Whitaker R.J."/>
        </authorList>
    </citation>
    <scope>NUCLEOTIDE SEQUENCE [LARGE SCALE GENOMIC DNA]</scope>
    <source>
        <strain>Y.N.15.51 / Yellowstone #2</strain>
    </source>
</reference>
<proteinExistence type="inferred from homology"/>
<dbReference type="EMBL" id="CP001404">
    <property type="protein sequence ID" value="ACP48162.1"/>
    <property type="molecule type" value="Genomic_DNA"/>
</dbReference>
<dbReference type="RefSeq" id="WP_012711730.1">
    <property type="nucleotide sequence ID" value="NC_012623.1"/>
</dbReference>
<dbReference type="SMR" id="C3NGA2"/>
<dbReference type="KEGG" id="sin:YN1551_1055"/>
<dbReference type="HOGENOM" id="CLU_2461923_0_0_2"/>
<dbReference type="Proteomes" id="UP000006818">
    <property type="component" value="Chromosome"/>
</dbReference>
<dbReference type="GO" id="GO:1990904">
    <property type="term" value="C:ribonucleoprotein complex"/>
    <property type="evidence" value="ECO:0007669"/>
    <property type="project" value="UniProtKB-KW"/>
</dbReference>
<dbReference type="GO" id="GO:0005840">
    <property type="term" value="C:ribosome"/>
    <property type="evidence" value="ECO:0007669"/>
    <property type="project" value="UniProtKB-KW"/>
</dbReference>
<dbReference type="GO" id="GO:0003735">
    <property type="term" value="F:structural constituent of ribosome"/>
    <property type="evidence" value="ECO:0007669"/>
    <property type="project" value="InterPro"/>
</dbReference>
<dbReference type="GO" id="GO:0006412">
    <property type="term" value="P:translation"/>
    <property type="evidence" value="ECO:0007669"/>
    <property type="project" value="UniProtKB-UniRule"/>
</dbReference>
<dbReference type="Gene3D" id="3.10.440.10">
    <property type="match status" value="1"/>
</dbReference>
<dbReference type="HAMAP" id="MF_00410">
    <property type="entry name" value="Ribosomal_eL31"/>
    <property type="match status" value="1"/>
</dbReference>
<dbReference type="InterPro" id="IPR000054">
    <property type="entry name" value="Ribosomal_eL31"/>
</dbReference>
<dbReference type="InterPro" id="IPR023621">
    <property type="entry name" value="Ribosomal_eL31_dom_sf"/>
</dbReference>
<dbReference type="NCBIfam" id="NF002258">
    <property type="entry name" value="PRK01192.1-1"/>
    <property type="match status" value="1"/>
</dbReference>
<dbReference type="Pfam" id="PF01198">
    <property type="entry name" value="Ribosomal_L31e"/>
    <property type="match status" value="1"/>
</dbReference>
<dbReference type="SMART" id="SM01380">
    <property type="entry name" value="Ribosomal_L31e"/>
    <property type="match status" value="1"/>
</dbReference>
<dbReference type="SUPFAM" id="SSF54575">
    <property type="entry name" value="Ribosomal protein L31e"/>
    <property type="match status" value="1"/>
</dbReference>
<accession>C3NGA2</accession>